<comment type="function">
    <text evidence="1">Zinc phosphodiesterase, which displays some tRNA 3'-processing endonuclease activity. Probably involved in tRNA maturation, by removing a 3'-trailer from precursor tRNA.</text>
</comment>
<comment type="catalytic activity">
    <reaction evidence="1">
        <text>Endonucleolytic cleavage of RNA, removing extra 3' nucleotides from tRNA precursor, generating 3' termini of tRNAs. A 3'-hydroxy group is left at the tRNA terminus and a 5'-phosphoryl group is left at the trailer molecule.</text>
        <dbReference type="EC" id="3.1.26.11"/>
    </reaction>
</comment>
<comment type="cofactor">
    <cofactor evidence="1">
        <name>Zn(2+)</name>
        <dbReference type="ChEBI" id="CHEBI:29105"/>
    </cofactor>
    <text evidence="1">Binds 2 Zn(2+) ions.</text>
</comment>
<comment type="subunit">
    <text evidence="1">Homodimer.</text>
</comment>
<comment type="similarity">
    <text evidence="1">Belongs to the RNase Z family.</text>
</comment>
<dbReference type="EC" id="3.1.26.11" evidence="1"/>
<dbReference type="EMBL" id="AE017226">
    <property type="protein sequence ID" value="AAS12465.1"/>
    <property type="molecule type" value="Genomic_DNA"/>
</dbReference>
<dbReference type="RefSeq" id="NP_972554.1">
    <property type="nucleotide sequence ID" value="NC_002967.9"/>
</dbReference>
<dbReference type="RefSeq" id="WP_002679668.1">
    <property type="nucleotide sequence ID" value="NC_002967.9"/>
</dbReference>
<dbReference type="SMR" id="Q73LB4"/>
<dbReference type="STRING" id="243275.TDE_1951"/>
<dbReference type="PaxDb" id="243275-TDE_1951"/>
<dbReference type="GeneID" id="2740191"/>
<dbReference type="KEGG" id="tde:TDE_1951"/>
<dbReference type="PATRIC" id="fig|243275.7.peg.1843"/>
<dbReference type="eggNOG" id="COG1234">
    <property type="taxonomic scope" value="Bacteria"/>
</dbReference>
<dbReference type="HOGENOM" id="CLU_031317_2_1_12"/>
<dbReference type="OrthoDB" id="9800940at2"/>
<dbReference type="Proteomes" id="UP000008212">
    <property type="component" value="Chromosome"/>
</dbReference>
<dbReference type="GO" id="GO:0042781">
    <property type="term" value="F:3'-tRNA processing endoribonuclease activity"/>
    <property type="evidence" value="ECO:0007669"/>
    <property type="project" value="UniProtKB-UniRule"/>
</dbReference>
<dbReference type="GO" id="GO:0008270">
    <property type="term" value="F:zinc ion binding"/>
    <property type="evidence" value="ECO:0007669"/>
    <property type="project" value="UniProtKB-UniRule"/>
</dbReference>
<dbReference type="CDD" id="cd07717">
    <property type="entry name" value="RNaseZ_ZiPD-like_MBL-fold"/>
    <property type="match status" value="1"/>
</dbReference>
<dbReference type="Gene3D" id="3.60.15.10">
    <property type="entry name" value="Ribonuclease Z/Hydroxyacylglutathione hydrolase-like"/>
    <property type="match status" value="1"/>
</dbReference>
<dbReference type="HAMAP" id="MF_01818">
    <property type="entry name" value="RNase_Z_BN"/>
    <property type="match status" value="1"/>
</dbReference>
<dbReference type="InterPro" id="IPR001279">
    <property type="entry name" value="Metallo-B-lactamas"/>
</dbReference>
<dbReference type="InterPro" id="IPR036866">
    <property type="entry name" value="RibonucZ/Hydroxyglut_hydro"/>
</dbReference>
<dbReference type="InterPro" id="IPR013471">
    <property type="entry name" value="RNase_Z/BN"/>
</dbReference>
<dbReference type="NCBIfam" id="NF000801">
    <property type="entry name" value="PRK00055.1-3"/>
    <property type="match status" value="1"/>
</dbReference>
<dbReference type="NCBIfam" id="TIGR02651">
    <property type="entry name" value="RNase_Z"/>
    <property type="match status" value="1"/>
</dbReference>
<dbReference type="PANTHER" id="PTHR46018">
    <property type="entry name" value="ZINC PHOSPHODIESTERASE ELAC PROTEIN 1"/>
    <property type="match status" value="1"/>
</dbReference>
<dbReference type="PANTHER" id="PTHR46018:SF2">
    <property type="entry name" value="ZINC PHOSPHODIESTERASE ELAC PROTEIN 1"/>
    <property type="match status" value="1"/>
</dbReference>
<dbReference type="Pfam" id="PF00753">
    <property type="entry name" value="Lactamase_B"/>
    <property type="match status" value="1"/>
</dbReference>
<dbReference type="Pfam" id="PF12706">
    <property type="entry name" value="Lactamase_B_2"/>
    <property type="match status" value="1"/>
</dbReference>
<dbReference type="SMART" id="SM00849">
    <property type="entry name" value="Lactamase_B"/>
    <property type="match status" value="1"/>
</dbReference>
<dbReference type="SUPFAM" id="SSF56281">
    <property type="entry name" value="Metallo-hydrolase/oxidoreductase"/>
    <property type="match status" value="1"/>
</dbReference>
<gene>
    <name evidence="1" type="primary">rnz</name>
    <name type="ordered locus">TDE_1951</name>
</gene>
<keyword id="KW-0255">Endonuclease</keyword>
<keyword id="KW-0378">Hydrolase</keyword>
<keyword id="KW-0479">Metal-binding</keyword>
<keyword id="KW-0540">Nuclease</keyword>
<keyword id="KW-1185">Reference proteome</keyword>
<keyword id="KW-0819">tRNA processing</keyword>
<keyword id="KW-0862">Zinc</keyword>
<organism>
    <name type="scientific">Treponema denticola (strain ATCC 35405 / DSM 14222 / CIP 103919 / JCM 8153 / KCTC 15104)</name>
    <dbReference type="NCBI Taxonomy" id="243275"/>
    <lineage>
        <taxon>Bacteria</taxon>
        <taxon>Pseudomonadati</taxon>
        <taxon>Spirochaetota</taxon>
        <taxon>Spirochaetia</taxon>
        <taxon>Spirochaetales</taxon>
        <taxon>Treponemataceae</taxon>
        <taxon>Treponema</taxon>
    </lineage>
</organism>
<accession>Q73LB4</accession>
<evidence type="ECO:0000255" key="1">
    <source>
        <dbReference type="HAMAP-Rule" id="MF_01818"/>
    </source>
</evidence>
<protein>
    <recommendedName>
        <fullName evidence="1">Ribonuclease Z</fullName>
        <shortName evidence="1">RNase Z</shortName>
        <ecNumber evidence="1">3.1.26.11</ecNumber>
    </recommendedName>
    <alternativeName>
        <fullName evidence="1">tRNA 3 endonuclease</fullName>
    </alternativeName>
    <alternativeName>
        <fullName evidence="1">tRNase Z</fullName>
    </alternativeName>
</protein>
<sequence length="308" mass="35340">MNLEAFILGCGGMMPLPYRHLTSVLLRREGDLFLFDCGEGTQVALRRLNLRWKRINAIFISHTHADHITGLPGLLMLSSQVDREEPLYIIGPPKVAEYVETSRKVLDMYINYEIIVKEIREPGVVYSTEEFQVRSFWLDHTKPCMGYTFEEFERPGEFNPEAARALNVPCGPLWSKLQGGNEVVSADGKTIRPQDVMGPKRKGRKFSFVTDTKYLPSIAQEVKYSDFFVCEGMFEKGMEKDAAEKKHMTCTQAAQIAKDAEVKKMALIHYSPRYTDNELKVLLDHAREVFPETILSKDRMNIQLEYED</sequence>
<reference key="1">
    <citation type="journal article" date="2004" name="Proc. Natl. Acad. Sci. U.S.A.">
        <title>Comparison of the genome of the oral pathogen Treponema denticola with other spirochete genomes.</title>
        <authorList>
            <person name="Seshadri R."/>
            <person name="Myers G.S.A."/>
            <person name="Tettelin H."/>
            <person name="Eisen J.A."/>
            <person name="Heidelberg J.F."/>
            <person name="Dodson R.J."/>
            <person name="Davidsen T.M."/>
            <person name="DeBoy R.T."/>
            <person name="Fouts D.E."/>
            <person name="Haft D.H."/>
            <person name="Selengut J."/>
            <person name="Ren Q."/>
            <person name="Brinkac L.M."/>
            <person name="Madupu R."/>
            <person name="Kolonay J.F."/>
            <person name="Durkin S.A."/>
            <person name="Daugherty S.C."/>
            <person name="Shetty J."/>
            <person name="Shvartsbeyn A."/>
            <person name="Gebregeorgis E."/>
            <person name="Geer K."/>
            <person name="Tsegaye G."/>
            <person name="Malek J.A."/>
            <person name="Ayodeji B."/>
            <person name="Shatsman S."/>
            <person name="McLeod M.P."/>
            <person name="Smajs D."/>
            <person name="Howell J.K."/>
            <person name="Pal S."/>
            <person name="Amin A."/>
            <person name="Vashisth P."/>
            <person name="McNeill T.Z."/>
            <person name="Xiang Q."/>
            <person name="Sodergren E."/>
            <person name="Baca E."/>
            <person name="Weinstock G.M."/>
            <person name="Norris S.J."/>
            <person name="Fraser C.M."/>
            <person name="Paulsen I.T."/>
        </authorList>
    </citation>
    <scope>NUCLEOTIDE SEQUENCE [LARGE SCALE GENOMIC DNA]</scope>
    <source>
        <strain>ATCC 35405 / DSM 14222 / CIP 103919 / JCM 8153 / KCTC 15104</strain>
    </source>
</reference>
<proteinExistence type="inferred from homology"/>
<name>RNZ_TREDE</name>
<feature type="chain" id="PRO_0000155917" description="Ribonuclease Z">
    <location>
        <begin position="1"/>
        <end position="308"/>
    </location>
</feature>
<feature type="active site" description="Proton acceptor" evidence="1">
    <location>
        <position position="66"/>
    </location>
</feature>
<feature type="binding site" evidence="1">
    <location>
        <position position="62"/>
    </location>
    <ligand>
        <name>Zn(2+)</name>
        <dbReference type="ChEBI" id="CHEBI:29105"/>
        <label>1</label>
        <note>catalytic</note>
    </ligand>
</feature>
<feature type="binding site" evidence="1">
    <location>
        <position position="64"/>
    </location>
    <ligand>
        <name>Zn(2+)</name>
        <dbReference type="ChEBI" id="CHEBI:29105"/>
        <label>1</label>
        <note>catalytic</note>
    </ligand>
</feature>
<feature type="binding site" evidence="1">
    <location>
        <position position="66"/>
    </location>
    <ligand>
        <name>Zn(2+)</name>
        <dbReference type="ChEBI" id="CHEBI:29105"/>
        <label>2</label>
        <note>catalytic</note>
    </ligand>
</feature>
<feature type="binding site" evidence="1">
    <location>
        <position position="67"/>
    </location>
    <ligand>
        <name>Zn(2+)</name>
        <dbReference type="ChEBI" id="CHEBI:29105"/>
        <label>2</label>
        <note>catalytic</note>
    </ligand>
</feature>
<feature type="binding site" evidence="1">
    <location>
        <position position="140"/>
    </location>
    <ligand>
        <name>Zn(2+)</name>
        <dbReference type="ChEBI" id="CHEBI:29105"/>
        <label>1</label>
        <note>catalytic</note>
    </ligand>
</feature>
<feature type="binding site" evidence="1">
    <location>
        <position position="211"/>
    </location>
    <ligand>
        <name>Zn(2+)</name>
        <dbReference type="ChEBI" id="CHEBI:29105"/>
        <label>1</label>
        <note>catalytic</note>
    </ligand>
</feature>
<feature type="binding site" evidence="1">
    <location>
        <position position="211"/>
    </location>
    <ligand>
        <name>Zn(2+)</name>
        <dbReference type="ChEBI" id="CHEBI:29105"/>
        <label>2</label>
        <note>catalytic</note>
    </ligand>
</feature>
<feature type="binding site" evidence="1">
    <location>
        <position position="269"/>
    </location>
    <ligand>
        <name>Zn(2+)</name>
        <dbReference type="ChEBI" id="CHEBI:29105"/>
        <label>2</label>
        <note>catalytic</note>
    </ligand>
</feature>